<organism>
    <name type="scientific">Arabidopsis thaliana</name>
    <name type="common">Mouse-ear cress</name>
    <dbReference type="NCBI Taxonomy" id="3702"/>
    <lineage>
        <taxon>Eukaryota</taxon>
        <taxon>Viridiplantae</taxon>
        <taxon>Streptophyta</taxon>
        <taxon>Embryophyta</taxon>
        <taxon>Tracheophyta</taxon>
        <taxon>Spermatophyta</taxon>
        <taxon>Magnoliopsida</taxon>
        <taxon>eudicotyledons</taxon>
        <taxon>Gunneridae</taxon>
        <taxon>Pentapetalae</taxon>
        <taxon>rosids</taxon>
        <taxon>malvids</taxon>
        <taxon>Brassicales</taxon>
        <taxon>Brassicaceae</taxon>
        <taxon>Camelineae</taxon>
        <taxon>Arabidopsis</taxon>
    </lineage>
</organism>
<feature type="signal peptide" evidence="2">
    <location>
        <begin position="1"/>
        <end position="24"/>
    </location>
</feature>
<feature type="chain" id="PRO_5008172805" description="Berberine bridge enzyme-like 16">
    <location>
        <begin position="25"/>
        <end position="540"/>
    </location>
</feature>
<feature type="domain" description="FAD-binding PCMH-type" evidence="4">
    <location>
        <begin position="79"/>
        <end position="254"/>
    </location>
</feature>
<feature type="glycosylation site" description="N-linked (GlcNAc...) asparagine" evidence="3">
    <location>
        <position position="59"/>
    </location>
</feature>
<feature type="glycosylation site" description="N-linked (GlcNAc...) asparagine" evidence="3">
    <location>
        <position position="325"/>
    </location>
</feature>
<feature type="glycosylation site" description="N-linked (GlcNAc...) asparagine" evidence="3">
    <location>
        <position position="496"/>
    </location>
</feature>
<feature type="disulfide bond" evidence="1">
    <location>
        <begin position="38"/>
        <end position="101"/>
    </location>
</feature>
<feature type="cross-link" description="6-(S-cysteinyl)-8alpha-(pros-histidyl)-FAD (His-Cys)" evidence="1">
    <location>
        <begin position="116"/>
        <end position="178"/>
    </location>
</feature>
<sequence>MKFWSRPLTFLIIIIYLIIQQVNSSPPSLSIPEHFLRCLDTQPSDHGSPNSRTAVIPTNSSFSTNLMNGVRNLRFASVSTRKPEVIVAAVTETHIRATISCCKLLNLELRIRSGGHDYEGFSYTSPVPFVILDMYNFNKIDINMKDETVWIQSGASLGQLYYNIASKSKVHAFPAGVCPKVGAGGHFSGGGFGNLMRKYGLSIDHIIDAQIMDANGKVYRNRQAMGEDVFWAIRGGGGGSYGVILAWKIKLVRVPEKVTVFKLERTVREGAVDLVHKWQQVAPVIDRDLFIRLEIKPINRKISKGKTIKVSFIGMFLGLPERLLNITKQSFPELHLTKEDCMVKKWIESSVFWANYPEKAPIELLLKRVSTNEYYWKRTSDFVQAPISKQGLAKIFQTMIDHSPLPRRVWMQWNPWGGKMAEIASDATAFVHRGGNVFMIEHFMNWYRPGDELEEKFLAIARSFKEAMAPFVSKNPREAFFNYRDVDIGITTPGYNATYEGAKVYGDSYFKGNYLRLVKIKARFDRTNFFRSQQGIPVLA</sequence>
<comment type="cofactor">
    <cofactor evidence="1">
        <name>FAD</name>
        <dbReference type="ChEBI" id="CHEBI:57692"/>
    </cofactor>
    <text evidence="1">Binds 1 FAD per subunit in a bicovalent manner.</text>
</comment>
<comment type="subcellular location">
    <subcellularLocation>
        <location evidence="1">Secreted</location>
        <location evidence="1">Cell wall</location>
    </subcellularLocation>
</comment>
<comment type="PTM">
    <text evidence="1">The FAD cofactor is bound via a bicovalent 6-S-cysteinyl, 8alpha-N1-histidyl FAD linkage.</text>
</comment>
<comment type="similarity">
    <text evidence="6">Belongs to the oxygen-dependent FAD-linked oxidoreductase family.</text>
</comment>
<evidence type="ECO:0000250" key="1">
    <source>
        <dbReference type="UniProtKB" id="O64743"/>
    </source>
</evidence>
<evidence type="ECO:0000255" key="2"/>
<evidence type="ECO:0000255" key="3">
    <source>
        <dbReference type="PROSITE-ProRule" id="PRU00498"/>
    </source>
</evidence>
<evidence type="ECO:0000255" key="4">
    <source>
        <dbReference type="PROSITE-ProRule" id="PRU00718"/>
    </source>
</evidence>
<evidence type="ECO:0000303" key="5">
    <source>
    </source>
</evidence>
<evidence type="ECO:0000305" key="6"/>
<evidence type="ECO:0000312" key="7">
    <source>
        <dbReference type="Araport" id="AT2G34810"/>
    </source>
</evidence>
<evidence type="ECO:0000312" key="8">
    <source>
        <dbReference type="EMBL" id="AAC12821.1"/>
    </source>
</evidence>
<name>BBE16_ARATH</name>
<proteinExistence type="evidence at transcript level"/>
<accession>O64745</accession>
<reference key="1">
    <citation type="journal article" date="1999" name="Nature">
        <title>Sequence and analysis of chromosome 2 of the plant Arabidopsis thaliana.</title>
        <authorList>
            <person name="Lin X."/>
            <person name="Kaul S."/>
            <person name="Rounsley S.D."/>
            <person name="Shea T.P."/>
            <person name="Benito M.-I."/>
            <person name="Town C.D."/>
            <person name="Fujii C.Y."/>
            <person name="Mason T.M."/>
            <person name="Bowman C.L."/>
            <person name="Barnstead M.E."/>
            <person name="Feldblyum T.V."/>
            <person name="Buell C.R."/>
            <person name="Ketchum K.A."/>
            <person name="Lee J.J."/>
            <person name="Ronning C.M."/>
            <person name="Koo H.L."/>
            <person name="Moffat K.S."/>
            <person name="Cronin L.A."/>
            <person name="Shen M."/>
            <person name="Pai G."/>
            <person name="Van Aken S."/>
            <person name="Umayam L."/>
            <person name="Tallon L.J."/>
            <person name="Gill J.E."/>
            <person name="Adams M.D."/>
            <person name="Carrera A.J."/>
            <person name="Creasy T.H."/>
            <person name="Goodman H.M."/>
            <person name="Somerville C.R."/>
            <person name="Copenhaver G.P."/>
            <person name="Preuss D."/>
            <person name="Nierman W.C."/>
            <person name="White O."/>
            <person name="Eisen J.A."/>
            <person name="Salzberg S.L."/>
            <person name="Fraser C.M."/>
            <person name="Venter J.C."/>
        </authorList>
    </citation>
    <scope>NUCLEOTIDE SEQUENCE [LARGE SCALE GENOMIC DNA]</scope>
    <source>
        <strain>cv. Columbia</strain>
    </source>
</reference>
<reference key="2">
    <citation type="journal article" date="2017" name="Plant J.">
        <title>Araport11: a complete reannotation of the Arabidopsis thaliana reference genome.</title>
        <authorList>
            <person name="Cheng C.Y."/>
            <person name="Krishnakumar V."/>
            <person name="Chan A.P."/>
            <person name="Thibaud-Nissen F."/>
            <person name="Schobel S."/>
            <person name="Town C.D."/>
        </authorList>
    </citation>
    <scope>GENOME REANNOTATION</scope>
    <source>
        <strain>cv. Columbia</strain>
    </source>
</reference>
<reference key="3">
    <citation type="journal article" date="2003" name="Science">
        <title>Empirical analysis of transcriptional activity in the Arabidopsis genome.</title>
        <authorList>
            <person name="Yamada K."/>
            <person name="Lim J."/>
            <person name="Dale J.M."/>
            <person name="Chen H."/>
            <person name="Shinn P."/>
            <person name="Palm C.J."/>
            <person name="Southwick A.M."/>
            <person name="Wu H.C."/>
            <person name="Kim C.J."/>
            <person name="Nguyen M."/>
            <person name="Pham P.K."/>
            <person name="Cheuk R.F."/>
            <person name="Karlin-Newmann G."/>
            <person name="Liu S.X."/>
            <person name="Lam B."/>
            <person name="Sakano H."/>
            <person name="Wu T."/>
            <person name="Yu G."/>
            <person name="Miranda M."/>
            <person name="Quach H.L."/>
            <person name="Tripp M."/>
            <person name="Chang C.H."/>
            <person name="Lee J.M."/>
            <person name="Toriumi M.J."/>
            <person name="Chan M.M."/>
            <person name="Tang C.C."/>
            <person name="Onodera C.S."/>
            <person name="Deng J.M."/>
            <person name="Akiyama K."/>
            <person name="Ansari Y."/>
            <person name="Arakawa T."/>
            <person name="Banh J."/>
            <person name="Banno F."/>
            <person name="Bowser L."/>
            <person name="Brooks S.Y."/>
            <person name="Carninci P."/>
            <person name="Chao Q."/>
            <person name="Choy N."/>
            <person name="Enju A."/>
            <person name="Goldsmith A.D."/>
            <person name="Gurjal M."/>
            <person name="Hansen N.F."/>
            <person name="Hayashizaki Y."/>
            <person name="Johnson-Hopson C."/>
            <person name="Hsuan V.W."/>
            <person name="Iida K."/>
            <person name="Karnes M."/>
            <person name="Khan S."/>
            <person name="Koesema E."/>
            <person name="Ishida J."/>
            <person name="Jiang P.X."/>
            <person name="Jones T."/>
            <person name="Kawai J."/>
            <person name="Kamiya A."/>
            <person name="Meyers C."/>
            <person name="Nakajima M."/>
            <person name="Narusaka M."/>
            <person name="Seki M."/>
            <person name="Sakurai T."/>
            <person name="Satou M."/>
            <person name="Tamse R."/>
            <person name="Vaysberg M."/>
            <person name="Wallender E.K."/>
            <person name="Wong C."/>
            <person name="Yamamura Y."/>
            <person name="Yuan S."/>
            <person name="Shinozaki K."/>
            <person name="Davis R.W."/>
            <person name="Theologis A."/>
            <person name="Ecker J.R."/>
        </authorList>
    </citation>
    <scope>NUCLEOTIDE SEQUENCE [LARGE SCALE MRNA]</scope>
    <source>
        <strain>cv. Columbia</strain>
    </source>
</reference>
<reference key="4">
    <citation type="journal article" date="2015" name="J. Biol. Chem.">
        <title>Oxidation of monolignols by members of the berberine bridge enzyme family suggests a role in plant cell wall metabolism.</title>
        <authorList>
            <person name="Daniel B."/>
            <person name="Pavkov-Keller T."/>
            <person name="Steiner B."/>
            <person name="Dordic A."/>
            <person name="Gutmann A."/>
            <person name="Nidetzky B."/>
            <person name="Sensen C.W."/>
            <person name="van der Graaff E."/>
            <person name="Wallner S."/>
            <person name="Gruber K."/>
            <person name="Macheroux P."/>
        </authorList>
    </citation>
    <scope>GENE FAMILY</scope>
    <scope>NOMENCLATURE</scope>
</reference>
<dbReference type="EC" id="1.1.1.-" evidence="1"/>
<dbReference type="EMBL" id="AC004238">
    <property type="protein sequence ID" value="AAC12821.1"/>
    <property type="molecule type" value="Genomic_DNA"/>
</dbReference>
<dbReference type="EMBL" id="CP002685">
    <property type="protein sequence ID" value="AEC09024.1"/>
    <property type="molecule type" value="Genomic_DNA"/>
</dbReference>
<dbReference type="EMBL" id="AY099836">
    <property type="protein sequence ID" value="AAM20687.1"/>
    <property type="molecule type" value="mRNA"/>
</dbReference>
<dbReference type="EMBL" id="BT008897">
    <property type="protein sequence ID" value="AAP68336.1"/>
    <property type="molecule type" value="mRNA"/>
</dbReference>
<dbReference type="PIR" id="T00463">
    <property type="entry name" value="T00463"/>
</dbReference>
<dbReference type="RefSeq" id="NP_181027.1">
    <property type="nucleotide sequence ID" value="NM_129034.3"/>
</dbReference>
<dbReference type="SMR" id="O64745"/>
<dbReference type="FunCoup" id="O64745">
    <property type="interactions" value="4"/>
</dbReference>
<dbReference type="STRING" id="3702.O64745"/>
<dbReference type="GlyGen" id="O64745">
    <property type="glycosylation" value="3 sites"/>
</dbReference>
<dbReference type="PaxDb" id="3702-AT2G34810.1"/>
<dbReference type="ProteomicsDB" id="240711"/>
<dbReference type="EnsemblPlants" id="AT2G34810.1">
    <property type="protein sequence ID" value="AT2G34810.1"/>
    <property type="gene ID" value="AT2G34810"/>
</dbReference>
<dbReference type="GeneID" id="818046"/>
<dbReference type="Gramene" id="AT2G34810.1">
    <property type="protein sequence ID" value="AT2G34810.1"/>
    <property type="gene ID" value="AT2G34810"/>
</dbReference>
<dbReference type="KEGG" id="ath:AT2G34810"/>
<dbReference type="Araport" id="AT2G34810"/>
<dbReference type="TAIR" id="AT2G34810">
    <property type="gene designation" value="ATBBE16"/>
</dbReference>
<dbReference type="eggNOG" id="ENOG502QVGN">
    <property type="taxonomic scope" value="Eukaryota"/>
</dbReference>
<dbReference type="HOGENOM" id="CLU_018354_6_0_1"/>
<dbReference type="InParanoid" id="O64745"/>
<dbReference type="OMA" id="DETVWIQ"/>
<dbReference type="PhylomeDB" id="O64745"/>
<dbReference type="BioCyc" id="ARA:AT2G34810-MONOMER"/>
<dbReference type="PRO" id="PR:O64745"/>
<dbReference type="Proteomes" id="UP000006548">
    <property type="component" value="Chromosome 2"/>
</dbReference>
<dbReference type="ExpressionAtlas" id="O64745">
    <property type="expression patterns" value="baseline and differential"/>
</dbReference>
<dbReference type="GO" id="GO:0005576">
    <property type="term" value="C:extracellular region"/>
    <property type="evidence" value="ECO:0007669"/>
    <property type="project" value="UniProtKB-KW"/>
</dbReference>
<dbReference type="GO" id="GO:0009505">
    <property type="term" value="C:plant-type cell wall"/>
    <property type="evidence" value="ECO:0000250"/>
    <property type="project" value="UniProtKB"/>
</dbReference>
<dbReference type="GO" id="GO:0071949">
    <property type="term" value="F:FAD binding"/>
    <property type="evidence" value="ECO:0007669"/>
    <property type="project" value="InterPro"/>
</dbReference>
<dbReference type="GO" id="GO:0016491">
    <property type="term" value="F:oxidoreductase activity"/>
    <property type="evidence" value="ECO:0007669"/>
    <property type="project" value="UniProtKB-KW"/>
</dbReference>
<dbReference type="GO" id="GO:0009753">
    <property type="term" value="P:response to jasmonic acid"/>
    <property type="evidence" value="ECO:0000270"/>
    <property type="project" value="TAIR"/>
</dbReference>
<dbReference type="GO" id="GO:0009611">
    <property type="term" value="P:response to wounding"/>
    <property type="evidence" value="ECO:0000270"/>
    <property type="project" value="TAIR"/>
</dbReference>
<dbReference type="FunFam" id="3.30.43.10:FF:000004">
    <property type="entry name" value="Berberine bridge enzyme-like 15"/>
    <property type="match status" value="1"/>
</dbReference>
<dbReference type="Gene3D" id="3.30.465.10">
    <property type="match status" value="1"/>
</dbReference>
<dbReference type="Gene3D" id="3.40.462.20">
    <property type="match status" value="1"/>
</dbReference>
<dbReference type="Gene3D" id="3.30.43.10">
    <property type="entry name" value="Uridine Diphospho-n-acetylenolpyruvylglucosamine Reductase, domain 2"/>
    <property type="match status" value="1"/>
</dbReference>
<dbReference type="InterPro" id="IPR012951">
    <property type="entry name" value="BBE"/>
</dbReference>
<dbReference type="InterPro" id="IPR016166">
    <property type="entry name" value="FAD-bd_PCMH"/>
</dbReference>
<dbReference type="InterPro" id="IPR036318">
    <property type="entry name" value="FAD-bd_PCMH-like_sf"/>
</dbReference>
<dbReference type="InterPro" id="IPR016167">
    <property type="entry name" value="FAD-bd_PCMH_sub1"/>
</dbReference>
<dbReference type="InterPro" id="IPR016169">
    <property type="entry name" value="FAD-bd_PCMH_sub2"/>
</dbReference>
<dbReference type="InterPro" id="IPR006094">
    <property type="entry name" value="Oxid_FAD_bind_N"/>
</dbReference>
<dbReference type="PANTHER" id="PTHR32448">
    <property type="entry name" value="OS08G0158400 PROTEIN"/>
    <property type="match status" value="1"/>
</dbReference>
<dbReference type="Pfam" id="PF08031">
    <property type="entry name" value="BBE"/>
    <property type="match status" value="1"/>
</dbReference>
<dbReference type="Pfam" id="PF01565">
    <property type="entry name" value="FAD_binding_4"/>
    <property type="match status" value="1"/>
</dbReference>
<dbReference type="SUPFAM" id="SSF56176">
    <property type="entry name" value="FAD-binding/transporter-associated domain-like"/>
    <property type="match status" value="1"/>
</dbReference>
<dbReference type="PROSITE" id="PS51387">
    <property type="entry name" value="FAD_PCMH"/>
    <property type="match status" value="1"/>
</dbReference>
<protein>
    <recommendedName>
        <fullName evidence="5">Berberine bridge enzyme-like 16</fullName>
        <shortName evidence="5">AtBBE-like 16</shortName>
        <ecNumber evidence="1">1.1.1.-</ecNumber>
    </recommendedName>
</protein>
<keyword id="KW-0134">Cell wall</keyword>
<keyword id="KW-1015">Disulfide bond</keyword>
<keyword id="KW-0274">FAD</keyword>
<keyword id="KW-0285">Flavoprotein</keyword>
<keyword id="KW-0325">Glycoprotein</keyword>
<keyword id="KW-0547">Nucleotide-binding</keyword>
<keyword id="KW-0560">Oxidoreductase</keyword>
<keyword id="KW-1185">Reference proteome</keyword>
<keyword id="KW-0964">Secreted</keyword>
<keyword id="KW-0732">Signal</keyword>
<gene>
    <name evidence="7" type="ordered locus">At2g34810</name>
    <name evidence="8" type="ORF">F19I3.4</name>
</gene>